<proteinExistence type="evidence at protein level"/>
<name>TGM4_MOUSE</name>
<gene>
    <name evidence="12 13" type="primary">Tgm4</name>
    <name evidence="11" type="synonym">Eapa1</name>
</gene>
<protein>
    <recommendedName>
        <fullName evidence="8">Protein-glutamine gamma-glutamyltransferase 4</fullName>
        <ecNumber>2.3.2.13</ecNumber>
    </recommendedName>
    <alternativeName>
        <fullName evidence="7">Experimental autoimmune prostatitis antigen 1</fullName>
    </alternativeName>
    <alternativeName>
        <fullName evidence="8">Transglutaminase-4</fullName>
        <shortName evidence="2">TGase-4</shortName>
    </alternativeName>
</protein>
<reference evidence="9 11" key="1">
    <citation type="journal article" date="2006" name="Blood">
        <title>Physiologic self antigens rapidly capacitate autoimmune disease-specific polyclonal CD4+ CD25+ regulatory T cells.</title>
        <authorList>
            <person name="Setiady Y.Y."/>
            <person name="Ohno K."/>
            <person name="Samy E.T."/>
            <person name="Bagavant H."/>
            <person name="Qiao H."/>
            <person name="Sharp C."/>
            <person name="She J.X."/>
            <person name="Tung K.S.K."/>
        </authorList>
    </citation>
    <scope>NUCLEOTIDE SEQUENCE [MRNA]</scope>
    <scope>TISSUE SPECIFICITY</scope>
    <source>
        <strain evidence="11">C57BL/6J</strain>
    </source>
</reference>
<reference evidence="12" key="2">
    <citation type="journal article" date="2005" name="Science">
        <title>The transcriptional landscape of the mammalian genome.</title>
        <authorList>
            <person name="Carninci P."/>
            <person name="Kasukawa T."/>
            <person name="Katayama S."/>
            <person name="Gough J."/>
            <person name="Frith M.C."/>
            <person name="Maeda N."/>
            <person name="Oyama R."/>
            <person name="Ravasi T."/>
            <person name="Lenhard B."/>
            <person name="Wells C."/>
            <person name="Kodzius R."/>
            <person name="Shimokawa K."/>
            <person name="Bajic V.B."/>
            <person name="Brenner S.E."/>
            <person name="Batalov S."/>
            <person name="Forrest A.R."/>
            <person name="Zavolan M."/>
            <person name="Davis M.J."/>
            <person name="Wilming L.G."/>
            <person name="Aidinis V."/>
            <person name="Allen J.E."/>
            <person name="Ambesi-Impiombato A."/>
            <person name="Apweiler R."/>
            <person name="Aturaliya R.N."/>
            <person name="Bailey T.L."/>
            <person name="Bansal M."/>
            <person name="Baxter L."/>
            <person name="Beisel K.W."/>
            <person name="Bersano T."/>
            <person name="Bono H."/>
            <person name="Chalk A.M."/>
            <person name="Chiu K.P."/>
            <person name="Choudhary V."/>
            <person name="Christoffels A."/>
            <person name="Clutterbuck D.R."/>
            <person name="Crowe M.L."/>
            <person name="Dalla E."/>
            <person name="Dalrymple B.P."/>
            <person name="de Bono B."/>
            <person name="Della Gatta G."/>
            <person name="di Bernardo D."/>
            <person name="Down T."/>
            <person name="Engstrom P."/>
            <person name="Fagiolini M."/>
            <person name="Faulkner G."/>
            <person name="Fletcher C.F."/>
            <person name="Fukushima T."/>
            <person name="Furuno M."/>
            <person name="Futaki S."/>
            <person name="Gariboldi M."/>
            <person name="Georgii-Hemming P."/>
            <person name="Gingeras T.R."/>
            <person name="Gojobori T."/>
            <person name="Green R.E."/>
            <person name="Gustincich S."/>
            <person name="Harbers M."/>
            <person name="Hayashi Y."/>
            <person name="Hensch T.K."/>
            <person name="Hirokawa N."/>
            <person name="Hill D."/>
            <person name="Huminiecki L."/>
            <person name="Iacono M."/>
            <person name="Ikeo K."/>
            <person name="Iwama A."/>
            <person name="Ishikawa T."/>
            <person name="Jakt M."/>
            <person name="Kanapin A."/>
            <person name="Katoh M."/>
            <person name="Kawasawa Y."/>
            <person name="Kelso J."/>
            <person name="Kitamura H."/>
            <person name="Kitano H."/>
            <person name="Kollias G."/>
            <person name="Krishnan S.P."/>
            <person name="Kruger A."/>
            <person name="Kummerfeld S.K."/>
            <person name="Kurochkin I.V."/>
            <person name="Lareau L.F."/>
            <person name="Lazarevic D."/>
            <person name="Lipovich L."/>
            <person name="Liu J."/>
            <person name="Liuni S."/>
            <person name="McWilliam S."/>
            <person name="Madan Babu M."/>
            <person name="Madera M."/>
            <person name="Marchionni L."/>
            <person name="Matsuda H."/>
            <person name="Matsuzawa S."/>
            <person name="Miki H."/>
            <person name="Mignone F."/>
            <person name="Miyake S."/>
            <person name="Morris K."/>
            <person name="Mottagui-Tabar S."/>
            <person name="Mulder N."/>
            <person name="Nakano N."/>
            <person name="Nakauchi H."/>
            <person name="Ng P."/>
            <person name="Nilsson R."/>
            <person name="Nishiguchi S."/>
            <person name="Nishikawa S."/>
            <person name="Nori F."/>
            <person name="Ohara O."/>
            <person name="Okazaki Y."/>
            <person name="Orlando V."/>
            <person name="Pang K.C."/>
            <person name="Pavan W.J."/>
            <person name="Pavesi G."/>
            <person name="Pesole G."/>
            <person name="Petrovsky N."/>
            <person name="Piazza S."/>
            <person name="Reed J."/>
            <person name="Reid J.F."/>
            <person name="Ring B.Z."/>
            <person name="Ringwald M."/>
            <person name="Rost B."/>
            <person name="Ruan Y."/>
            <person name="Salzberg S.L."/>
            <person name="Sandelin A."/>
            <person name="Schneider C."/>
            <person name="Schoenbach C."/>
            <person name="Sekiguchi K."/>
            <person name="Semple C.A."/>
            <person name="Seno S."/>
            <person name="Sessa L."/>
            <person name="Sheng Y."/>
            <person name="Shibata Y."/>
            <person name="Shimada H."/>
            <person name="Shimada K."/>
            <person name="Silva D."/>
            <person name="Sinclair B."/>
            <person name="Sperling S."/>
            <person name="Stupka E."/>
            <person name="Sugiura K."/>
            <person name="Sultana R."/>
            <person name="Takenaka Y."/>
            <person name="Taki K."/>
            <person name="Tammoja K."/>
            <person name="Tan S.L."/>
            <person name="Tang S."/>
            <person name="Taylor M.S."/>
            <person name="Tegner J."/>
            <person name="Teichmann S.A."/>
            <person name="Ueda H.R."/>
            <person name="van Nimwegen E."/>
            <person name="Verardo R."/>
            <person name="Wei C.L."/>
            <person name="Yagi K."/>
            <person name="Yamanishi H."/>
            <person name="Zabarovsky E."/>
            <person name="Zhu S."/>
            <person name="Zimmer A."/>
            <person name="Hide W."/>
            <person name="Bult C."/>
            <person name="Grimmond S.M."/>
            <person name="Teasdale R.D."/>
            <person name="Liu E.T."/>
            <person name="Brusic V."/>
            <person name="Quackenbush J."/>
            <person name="Wahlestedt C."/>
            <person name="Mattick J.S."/>
            <person name="Hume D.A."/>
            <person name="Kai C."/>
            <person name="Sasaki D."/>
            <person name="Tomaru Y."/>
            <person name="Fukuda S."/>
            <person name="Kanamori-Katayama M."/>
            <person name="Suzuki M."/>
            <person name="Aoki J."/>
            <person name="Arakawa T."/>
            <person name="Iida J."/>
            <person name="Imamura K."/>
            <person name="Itoh M."/>
            <person name="Kato T."/>
            <person name="Kawaji H."/>
            <person name="Kawagashira N."/>
            <person name="Kawashima T."/>
            <person name="Kojima M."/>
            <person name="Kondo S."/>
            <person name="Konno H."/>
            <person name="Nakano K."/>
            <person name="Ninomiya N."/>
            <person name="Nishio T."/>
            <person name="Okada M."/>
            <person name="Plessy C."/>
            <person name="Shibata K."/>
            <person name="Shiraki T."/>
            <person name="Suzuki S."/>
            <person name="Tagami M."/>
            <person name="Waki K."/>
            <person name="Watahiki A."/>
            <person name="Okamura-Oho Y."/>
            <person name="Suzuki H."/>
            <person name="Kawai J."/>
            <person name="Hayashizaki Y."/>
        </authorList>
    </citation>
    <scope>NUCLEOTIDE SEQUENCE [LARGE SCALE MRNA]</scope>
    <source>
        <strain evidence="12">C57BL/6J</strain>
        <tissue evidence="12">Urinary bladder</tissue>
    </source>
</reference>
<reference evidence="10" key="3">
    <citation type="journal article" date="2004" name="Genome Res.">
        <title>The status, quality, and expansion of the NIH full-length cDNA project: the Mammalian Gene Collection (MGC).</title>
        <authorList>
            <consortium name="The MGC Project Team"/>
        </authorList>
    </citation>
    <scope>NUCLEOTIDE SEQUENCE [LARGE SCALE MRNA]</scope>
</reference>
<reference evidence="9" key="4">
    <citation type="journal article" date="2008" name="J. Chromatogr. B">
        <title>Purification and identification of transglutaminase from mouse coagulating gland and its cross-linking activity among seminal vesicle secretion proteins.</title>
        <authorList>
            <person name="Tseng H.-C."/>
            <person name="Lin H.-J."/>
            <person name="Sudhakar Gandhi P.S."/>
            <person name="Wang C.-Y."/>
            <person name="Chen Y.-H."/>
        </authorList>
    </citation>
    <scope>PROTEIN SEQUENCE OF 5-19; 37-58; 67-81; 146-162; 166-176; 288-300; 308-322; 324-359; 368-386; 394-406; 418-435; 484-500; 525-536 AND 595-642</scope>
    <scope>FUNCTION</scope>
    <scope>CATALYTIC ACTIVITY</scope>
    <scope>SUBCELLULAR LOCATION</scope>
    <scope>TISSUE SPECIFICITY</scope>
    <source>
        <tissue evidence="6">Coagulating gland secretion</tissue>
    </source>
</reference>
<accession>Q8BZH1</accession>
<accession>B7ZP44</accession>
<accession>Q8K460</accession>
<comment type="function">
    <text evidence="6">Associated with the mammalian reproductive process. Plays an important role in the formation of the seminal coagulum through the cross-linking of specific proteins present in the seminal plasma. Transglutaminase is also required to stabilize the copulatory plug.</text>
</comment>
<comment type="catalytic activity">
    <reaction evidence="4 6">
        <text>L-glutaminyl-[protein] + L-lysyl-[protein] = [protein]-L-lysyl-N(6)-5-L-glutamyl-[protein] + NH4(+)</text>
        <dbReference type="Rhea" id="RHEA:54816"/>
        <dbReference type="Rhea" id="RHEA-COMP:9752"/>
        <dbReference type="Rhea" id="RHEA-COMP:10207"/>
        <dbReference type="Rhea" id="RHEA-COMP:14005"/>
        <dbReference type="ChEBI" id="CHEBI:28938"/>
        <dbReference type="ChEBI" id="CHEBI:29969"/>
        <dbReference type="ChEBI" id="CHEBI:30011"/>
        <dbReference type="ChEBI" id="CHEBI:138370"/>
        <dbReference type="EC" id="2.3.2.13"/>
    </reaction>
</comment>
<comment type="cofactor">
    <cofactor evidence="1">
        <name>Ca(2+)</name>
        <dbReference type="ChEBI" id="CHEBI:29108"/>
    </cofactor>
    <text evidence="1">Binds 1 Ca(2+) ion per subunit.</text>
</comment>
<comment type="subunit">
    <text evidence="2">Homodimer.</text>
</comment>
<comment type="subcellular location">
    <subcellularLocation>
        <location evidence="6">Secreted</location>
    </subcellularLocation>
</comment>
<comment type="tissue specificity">
    <text evidence="5 6">Expressed in the coagulating gland and in the dorsal part of the prostate. Not expressed in the brain, heart, kidney, liver, lung, muscle, pancreas, spleen, stomach, testis and thymus.</text>
</comment>
<comment type="similarity">
    <text evidence="3">Belongs to the transglutaminase superfamily. Transglutaminase family.</text>
</comment>
<dbReference type="EC" id="2.3.2.13"/>
<dbReference type="EMBL" id="AF486627">
    <property type="protein sequence ID" value="AAM45940.1"/>
    <property type="molecule type" value="mRNA"/>
</dbReference>
<dbReference type="EMBL" id="AK035279">
    <property type="protein sequence ID" value="BAC29013.1"/>
    <property type="molecule type" value="mRNA"/>
</dbReference>
<dbReference type="EMBL" id="BC141297">
    <property type="protein sequence ID" value="AAI41298.1"/>
    <property type="molecule type" value="mRNA"/>
</dbReference>
<dbReference type="EMBL" id="BC145622">
    <property type="protein sequence ID" value="AAI45623.1"/>
    <property type="molecule type" value="mRNA"/>
</dbReference>
<dbReference type="CCDS" id="CCDS23653.1"/>
<dbReference type="RefSeq" id="NP_808579.2">
    <property type="nucleotide sequence ID" value="NM_177911.4"/>
</dbReference>
<dbReference type="SMR" id="Q8BZH1"/>
<dbReference type="FunCoup" id="Q8BZH1">
    <property type="interactions" value="60"/>
</dbReference>
<dbReference type="STRING" id="10090.ENSMUSP00000026893"/>
<dbReference type="GlyCosmos" id="Q8BZH1">
    <property type="glycosylation" value="5 sites, No reported glycans"/>
</dbReference>
<dbReference type="GlyGen" id="Q8BZH1">
    <property type="glycosylation" value="6 sites, 1 N-linked glycan (1 site)"/>
</dbReference>
<dbReference type="iPTMnet" id="Q8BZH1"/>
<dbReference type="PhosphoSitePlus" id="Q8BZH1"/>
<dbReference type="PaxDb" id="10090-ENSMUSP00000026893"/>
<dbReference type="ProteomicsDB" id="262902"/>
<dbReference type="DNASU" id="331046"/>
<dbReference type="GeneID" id="331046"/>
<dbReference type="KEGG" id="mmu:331046"/>
<dbReference type="UCSC" id="uc009sfo.1">
    <property type="organism name" value="mouse"/>
</dbReference>
<dbReference type="AGR" id="MGI:3027002"/>
<dbReference type="CTD" id="7047"/>
<dbReference type="MGI" id="MGI:3027002">
    <property type="gene designation" value="Tgm4"/>
</dbReference>
<dbReference type="eggNOG" id="ENOG502QQ46">
    <property type="taxonomic scope" value="Eukaryota"/>
</dbReference>
<dbReference type="InParanoid" id="Q8BZH1"/>
<dbReference type="OrthoDB" id="437511at2759"/>
<dbReference type="PhylomeDB" id="Q8BZH1"/>
<dbReference type="TreeFam" id="TF324278"/>
<dbReference type="BRENDA" id="2.3.2.13">
    <property type="organism ID" value="3474"/>
</dbReference>
<dbReference type="BioGRID-ORCS" id="331046">
    <property type="hits" value="0 hits in 76 CRISPR screens"/>
</dbReference>
<dbReference type="ChiTaRS" id="Tgm4">
    <property type="organism name" value="mouse"/>
</dbReference>
<dbReference type="PRO" id="PR:Q8BZH1"/>
<dbReference type="Proteomes" id="UP000000589">
    <property type="component" value="Unplaced"/>
</dbReference>
<dbReference type="RNAct" id="Q8BZH1">
    <property type="molecule type" value="protein"/>
</dbReference>
<dbReference type="GO" id="GO:0005576">
    <property type="term" value="C:extracellular region"/>
    <property type="evidence" value="ECO:0007669"/>
    <property type="project" value="UniProtKB-SubCell"/>
</dbReference>
<dbReference type="GO" id="GO:0046872">
    <property type="term" value="F:metal ion binding"/>
    <property type="evidence" value="ECO:0007669"/>
    <property type="project" value="UniProtKB-KW"/>
</dbReference>
<dbReference type="GO" id="GO:0003810">
    <property type="term" value="F:protein-glutamine gamma-glutamyltransferase activity"/>
    <property type="evidence" value="ECO:0007669"/>
    <property type="project" value="UniProtKB-EC"/>
</dbReference>
<dbReference type="GO" id="GO:0042628">
    <property type="term" value="P:mating plug formation"/>
    <property type="evidence" value="ECO:0000315"/>
    <property type="project" value="MGI"/>
</dbReference>
<dbReference type="FunFam" id="3.90.260.10:FF:000001">
    <property type="entry name" value="Protein-glutamine gamma-glutamyltransferase 2"/>
    <property type="match status" value="1"/>
</dbReference>
<dbReference type="FunFam" id="2.60.40.10:FF:001406">
    <property type="entry name" value="Protein-glutamine gamma-glutamyltransferase 4"/>
    <property type="match status" value="1"/>
</dbReference>
<dbReference type="FunFam" id="2.60.40.10:FF:001482">
    <property type="entry name" value="Protein-glutamine gamma-glutamyltransferase 4"/>
    <property type="match status" value="1"/>
</dbReference>
<dbReference type="Gene3D" id="2.60.40.10">
    <property type="entry name" value="Immunoglobulins"/>
    <property type="match status" value="3"/>
</dbReference>
<dbReference type="Gene3D" id="3.90.260.10">
    <property type="entry name" value="Transglutaminase-like"/>
    <property type="match status" value="1"/>
</dbReference>
<dbReference type="InterPro" id="IPR013783">
    <property type="entry name" value="Ig-like_fold"/>
</dbReference>
<dbReference type="InterPro" id="IPR014756">
    <property type="entry name" value="Ig_E-set"/>
</dbReference>
<dbReference type="InterPro" id="IPR038765">
    <property type="entry name" value="Papain-like_cys_pep_sf"/>
</dbReference>
<dbReference type="InterPro" id="IPR050779">
    <property type="entry name" value="Transglutaminase"/>
</dbReference>
<dbReference type="InterPro" id="IPR002931">
    <property type="entry name" value="Transglutaminase-like"/>
</dbReference>
<dbReference type="InterPro" id="IPR036985">
    <property type="entry name" value="Transglutaminase-like_sf"/>
</dbReference>
<dbReference type="InterPro" id="IPR023608">
    <property type="entry name" value="Transglutaminase_animal"/>
</dbReference>
<dbReference type="InterPro" id="IPR013808">
    <property type="entry name" value="Transglutaminase_AS"/>
</dbReference>
<dbReference type="InterPro" id="IPR008958">
    <property type="entry name" value="Transglutaminase_C"/>
</dbReference>
<dbReference type="InterPro" id="IPR036238">
    <property type="entry name" value="Transglutaminase_C_sf"/>
</dbReference>
<dbReference type="InterPro" id="IPR001102">
    <property type="entry name" value="Transglutaminase_N"/>
</dbReference>
<dbReference type="PANTHER" id="PTHR11590">
    <property type="entry name" value="PROTEIN-GLUTAMINE GAMMA-GLUTAMYLTRANSFERASE"/>
    <property type="match status" value="1"/>
</dbReference>
<dbReference type="PANTHER" id="PTHR11590:SF70">
    <property type="entry name" value="PROTEIN-GLUTAMINE GAMMA-GLUTAMYLTRANSFERASE 4"/>
    <property type="match status" value="1"/>
</dbReference>
<dbReference type="Pfam" id="PF00927">
    <property type="entry name" value="Transglut_C"/>
    <property type="match status" value="1"/>
</dbReference>
<dbReference type="Pfam" id="PF01841">
    <property type="entry name" value="Transglut_core"/>
    <property type="match status" value="1"/>
</dbReference>
<dbReference type="Pfam" id="PF00868">
    <property type="entry name" value="Transglut_N"/>
    <property type="match status" value="1"/>
</dbReference>
<dbReference type="PIRSF" id="PIRSF000459">
    <property type="entry name" value="TGM_EBP42"/>
    <property type="match status" value="1"/>
</dbReference>
<dbReference type="SMART" id="SM00460">
    <property type="entry name" value="TGc"/>
    <property type="match status" value="1"/>
</dbReference>
<dbReference type="SUPFAM" id="SSF54001">
    <property type="entry name" value="Cysteine proteinases"/>
    <property type="match status" value="1"/>
</dbReference>
<dbReference type="SUPFAM" id="SSF81296">
    <property type="entry name" value="E set domains"/>
    <property type="match status" value="1"/>
</dbReference>
<dbReference type="SUPFAM" id="SSF49309">
    <property type="entry name" value="Transglutaminase, two C-terminal domains"/>
    <property type="match status" value="2"/>
</dbReference>
<dbReference type="PROSITE" id="PS00547">
    <property type="entry name" value="TRANSGLUTAMINASES"/>
    <property type="match status" value="1"/>
</dbReference>
<keyword id="KW-0012">Acyltransferase</keyword>
<keyword id="KW-0106">Calcium</keyword>
<keyword id="KW-0188">Copulatory plug</keyword>
<keyword id="KW-0903">Direct protein sequencing</keyword>
<keyword id="KW-0325">Glycoprotein</keyword>
<keyword id="KW-0479">Metal-binding</keyword>
<keyword id="KW-1185">Reference proteome</keyword>
<keyword id="KW-0964">Secreted</keyword>
<keyword id="KW-0808">Transferase</keyword>
<sequence length="670" mass="75591">MDSRNVLIIYAVNVERKLNAAAHHTSEYQTKKLVLRRGQIFTLKVILNRPLQPQDELKVTFTSGQRDPPYMVELDPVTSYRSKGWQVKIAKQSGVEVILNVISAADAVVGRYKMRVNEYKAGVFYLLFNPWCSDDSVFMASEEERAEYILNDTGYMYMGFAKQIKEKPWTFGQFEKHILSCCFNLLFQLENNEMQNPVLVSRAICTMMCAANGGVLMGNWTGDYADGTAPYVWTSSVPILQQHYVTRMPVRYGQCWVFSGILTTALRAVGIPARSVTNFESAHDTEKNLTVDIYLDESGKTIPHLTKDSVWNFHVWTDAWMKRQDLPHGYDGWQVLDSTPQEISDGGFRTGPSPLTAIRQGLIQMKYDTTFVFTEVNGDKFIWLVKQNQEREKNILIAVETASLGKKISTKMVGENRREDITLQYRFPEGSPEERKVMAKASGKPSDDKLNSRTLNNSLQISVLQNSLELGAPIYLTITLKRKTATPQNVNISCSLNLQTYTGNKKTNLGVIQKTVQIHGQESRVFLTMDASYYIYKLGMVDDEMVIGGFIIAEIVDSGERVATDTTLCFLYSAFSVEMPSTGKVKQPLVITSKFTNTLPIPLTNIKFSVESLGLANMKSWEQETVPPGKTITFQMECTPVKAGPQKFIVKFISRQVKEVHAEKVVLISK</sequence>
<organism>
    <name type="scientific">Mus musculus</name>
    <name type="common">Mouse</name>
    <dbReference type="NCBI Taxonomy" id="10090"/>
    <lineage>
        <taxon>Eukaryota</taxon>
        <taxon>Metazoa</taxon>
        <taxon>Chordata</taxon>
        <taxon>Craniata</taxon>
        <taxon>Vertebrata</taxon>
        <taxon>Euteleostomi</taxon>
        <taxon>Mammalia</taxon>
        <taxon>Eutheria</taxon>
        <taxon>Euarchontoglires</taxon>
        <taxon>Glires</taxon>
        <taxon>Rodentia</taxon>
        <taxon>Myomorpha</taxon>
        <taxon>Muroidea</taxon>
        <taxon>Muridae</taxon>
        <taxon>Murinae</taxon>
        <taxon>Mus</taxon>
        <taxon>Mus</taxon>
    </lineage>
</organism>
<feature type="chain" id="PRO_0000385448" description="Protein-glutamine gamma-glutamyltransferase 4">
    <location>
        <begin position="1"/>
        <end position="670"/>
    </location>
</feature>
<feature type="active site" evidence="1 4">
    <location>
        <position position="255"/>
    </location>
</feature>
<feature type="active site" evidence="1 4">
    <location>
        <position position="314"/>
    </location>
</feature>
<feature type="active site" evidence="1 4">
    <location>
        <position position="337"/>
    </location>
</feature>
<feature type="binding site" evidence="1">
    <location>
        <position position="377"/>
    </location>
    <ligand>
        <name>Ca(2+)</name>
        <dbReference type="ChEBI" id="CHEBI:29108"/>
    </ligand>
</feature>
<feature type="binding site" evidence="1">
    <location>
        <position position="379"/>
    </location>
    <ligand>
        <name>Ca(2+)</name>
        <dbReference type="ChEBI" id="CHEBI:29108"/>
    </ligand>
</feature>
<feature type="binding site" evidence="1">
    <location>
        <position position="429"/>
    </location>
    <ligand>
        <name>Ca(2+)</name>
        <dbReference type="ChEBI" id="CHEBI:29108"/>
    </ligand>
</feature>
<feature type="binding site" evidence="1">
    <location>
        <position position="434"/>
    </location>
    <ligand>
        <name>Ca(2+)</name>
        <dbReference type="ChEBI" id="CHEBI:29108"/>
    </ligand>
</feature>
<feature type="glycosylation site" description="N-linked (GlcNAc...) asparagine" evidence="3">
    <location>
        <position position="151"/>
    </location>
</feature>
<feature type="glycosylation site" description="N-linked (GlcNAc...) asparagine" evidence="3">
    <location>
        <position position="219"/>
    </location>
</feature>
<feature type="glycosylation site" description="N-linked (GlcNAc...) asparagine" evidence="3">
    <location>
        <position position="288"/>
    </location>
</feature>
<feature type="glycosylation site" description="N-linked (GlcNAc...) asparagine" evidence="3">
    <location>
        <position position="456"/>
    </location>
</feature>
<feature type="glycosylation site" description="N-linked (GlcNAc...) asparagine" evidence="3">
    <location>
        <position position="491"/>
    </location>
</feature>
<feature type="sequence conflict" description="In Ref. 2; BAC29013." evidence="9" ref="2">
    <original>D</original>
    <variation>G</variation>
    <location>
        <position position="134"/>
    </location>
</feature>
<feature type="sequence conflict" description="In Ref. 2; BAC29013 and 4; AA sequence." evidence="9" ref="2 4">
    <original>L</original>
    <variation>I</variation>
    <location>
        <position position="404"/>
    </location>
</feature>
<feature type="sequence conflict" description="In Ref. 2; BAC29013 and 4; AA sequence." evidence="9" ref="2 4">
    <original>R</original>
    <variation>K</variation>
    <location>
        <position position="426"/>
    </location>
</feature>
<feature type="sequence conflict" description="In Ref. 2; BAC29013." evidence="9" ref="2">
    <original>T</original>
    <variation>A</variation>
    <location>
        <position position="528"/>
    </location>
</feature>
<feature type="sequence conflict" description="In Ref. 2; BAC29013." evidence="9" ref="2">
    <original>K</original>
    <variation>E</variation>
    <location>
        <position position="537"/>
    </location>
</feature>
<evidence type="ECO:0000250" key="1">
    <source>
        <dbReference type="UniProtKB" id="P00488"/>
    </source>
</evidence>
<evidence type="ECO:0000250" key="2">
    <source>
        <dbReference type="UniProtKB" id="Q99041"/>
    </source>
</evidence>
<evidence type="ECO:0000255" key="3"/>
<evidence type="ECO:0000255" key="4">
    <source>
        <dbReference type="PROSITE-ProRule" id="PRU10024"/>
    </source>
</evidence>
<evidence type="ECO:0000269" key="5">
    <source>
    </source>
</evidence>
<evidence type="ECO:0000269" key="6">
    <source>
    </source>
</evidence>
<evidence type="ECO:0000303" key="7">
    <source>
    </source>
</evidence>
<evidence type="ECO:0000303" key="8">
    <source>
    </source>
</evidence>
<evidence type="ECO:0000305" key="9"/>
<evidence type="ECO:0000312" key="10">
    <source>
        <dbReference type="EMBL" id="AAI41298.1"/>
    </source>
</evidence>
<evidence type="ECO:0000312" key="11">
    <source>
        <dbReference type="EMBL" id="AAM45940.1"/>
    </source>
</evidence>
<evidence type="ECO:0000312" key="12">
    <source>
        <dbReference type="EMBL" id="BAC29013.1"/>
    </source>
</evidence>
<evidence type="ECO:0000312" key="13">
    <source>
        <dbReference type="MGI" id="MGI:3027002"/>
    </source>
</evidence>